<sequence>MEEYEAQLLVVEQALENAADDAQRQDLLALKNNLQELLALTRESGDEAPIDELPQQGDNLDDELQRLKSELNDLEAAGSSQTALDEERQLADLRTKYTAMVGEKCSAPHEHSWGTCYHNALICGVDDEVVMNSEGVLDARLRVLFTNPTHREMLPCSYYLEGECRFDEAKCRFSHGALVTGSSIRKYNPPDFHKLSRSRPVFALLPDRLWHRGRVLCVNFVEQICRVRLDGQDHKERERDFKFEELYPLTTDQDEDDELSSEESNSSMNDNSSDEAESDMDDLEEARRARMVELSLFTFKPTERLGAWEEFTRGIGSKLMEKMGYIHGTGLGSDGRGIVTPVSAQILPQGRSLDACMELREAANGDKDYFSVERKLKRAQRRQRKADEKAYVRESQRVDVFTFLNDSVLGPGESTQQGEQVTKKAKTNELQQHSTKTLNVETVRIADEIRRKQRDMAKVKQSLDRNSGDAQLQKRLQVQMQSHKQELATLQAQERSLSKEQQTRKSKNKMFEF</sequence>
<gene>
    <name type="ORF">CG4709</name>
</gene>
<feature type="chain" id="PRO_0000385203" description="Zinc finger CCCH-type with G patch domain-containing protein">
    <location>
        <begin position="1"/>
        <end position="513"/>
    </location>
</feature>
<feature type="domain" description="G-patch" evidence="2">
    <location>
        <begin position="312"/>
        <end position="358"/>
    </location>
</feature>
<feature type="zinc finger region" description="C3H1-type" evidence="3">
    <location>
        <begin position="155"/>
        <end position="178"/>
    </location>
</feature>
<feature type="region of interest" description="Disordered" evidence="4">
    <location>
        <begin position="252"/>
        <end position="283"/>
    </location>
</feature>
<feature type="region of interest" description="Disordered" evidence="4">
    <location>
        <begin position="478"/>
        <end position="513"/>
    </location>
</feature>
<feature type="compositionally biased region" description="Acidic residues" evidence="4">
    <location>
        <begin position="252"/>
        <end position="261"/>
    </location>
</feature>
<feature type="compositionally biased region" description="Low complexity" evidence="4">
    <location>
        <begin position="262"/>
        <end position="271"/>
    </location>
</feature>
<feature type="compositionally biased region" description="Acidic residues" evidence="4">
    <location>
        <begin position="272"/>
        <end position="283"/>
    </location>
</feature>
<feature type="compositionally biased region" description="Polar residues" evidence="4">
    <location>
        <begin position="478"/>
        <end position="495"/>
    </location>
</feature>
<feature type="compositionally biased region" description="Basic and acidic residues" evidence="4">
    <location>
        <begin position="496"/>
        <end position="513"/>
    </location>
</feature>
<proteinExistence type="evidence at transcript level"/>
<reference key="1">
    <citation type="journal article" date="2000" name="Science">
        <title>The genome sequence of Drosophila melanogaster.</title>
        <authorList>
            <person name="Adams M.D."/>
            <person name="Celniker S.E."/>
            <person name="Holt R.A."/>
            <person name="Evans C.A."/>
            <person name="Gocayne J.D."/>
            <person name="Amanatides P.G."/>
            <person name="Scherer S.E."/>
            <person name="Li P.W."/>
            <person name="Hoskins R.A."/>
            <person name="Galle R.F."/>
            <person name="George R.A."/>
            <person name="Lewis S.E."/>
            <person name="Richards S."/>
            <person name="Ashburner M."/>
            <person name="Henderson S.N."/>
            <person name="Sutton G.G."/>
            <person name="Wortman J.R."/>
            <person name="Yandell M.D."/>
            <person name="Zhang Q."/>
            <person name="Chen L.X."/>
            <person name="Brandon R.C."/>
            <person name="Rogers Y.-H.C."/>
            <person name="Blazej R.G."/>
            <person name="Champe M."/>
            <person name="Pfeiffer B.D."/>
            <person name="Wan K.H."/>
            <person name="Doyle C."/>
            <person name="Baxter E.G."/>
            <person name="Helt G."/>
            <person name="Nelson C.R."/>
            <person name="Miklos G.L.G."/>
            <person name="Abril J.F."/>
            <person name="Agbayani A."/>
            <person name="An H.-J."/>
            <person name="Andrews-Pfannkoch C."/>
            <person name="Baldwin D."/>
            <person name="Ballew R.M."/>
            <person name="Basu A."/>
            <person name="Baxendale J."/>
            <person name="Bayraktaroglu L."/>
            <person name="Beasley E.M."/>
            <person name="Beeson K.Y."/>
            <person name="Benos P.V."/>
            <person name="Berman B.P."/>
            <person name="Bhandari D."/>
            <person name="Bolshakov S."/>
            <person name="Borkova D."/>
            <person name="Botchan M.R."/>
            <person name="Bouck J."/>
            <person name="Brokstein P."/>
            <person name="Brottier P."/>
            <person name="Burtis K.C."/>
            <person name="Busam D.A."/>
            <person name="Butler H."/>
            <person name="Cadieu E."/>
            <person name="Center A."/>
            <person name="Chandra I."/>
            <person name="Cherry J.M."/>
            <person name="Cawley S."/>
            <person name="Dahlke C."/>
            <person name="Davenport L.B."/>
            <person name="Davies P."/>
            <person name="de Pablos B."/>
            <person name="Delcher A."/>
            <person name="Deng Z."/>
            <person name="Mays A.D."/>
            <person name="Dew I."/>
            <person name="Dietz S.M."/>
            <person name="Dodson K."/>
            <person name="Doup L.E."/>
            <person name="Downes M."/>
            <person name="Dugan-Rocha S."/>
            <person name="Dunkov B.C."/>
            <person name="Dunn P."/>
            <person name="Durbin K.J."/>
            <person name="Evangelista C.C."/>
            <person name="Ferraz C."/>
            <person name="Ferriera S."/>
            <person name="Fleischmann W."/>
            <person name="Fosler C."/>
            <person name="Gabrielian A.E."/>
            <person name="Garg N.S."/>
            <person name="Gelbart W.M."/>
            <person name="Glasser K."/>
            <person name="Glodek A."/>
            <person name="Gong F."/>
            <person name="Gorrell J.H."/>
            <person name="Gu Z."/>
            <person name="Guan P."/>
            <person name="Harris M."/>
            <person name="Harris N.L."/>
            <person name="Harvey D.A."/>
            <person name="Heiman T.J."/>
            <person name="Hernandez J.R."/>
            <person name="Houck J."/>
            <person name="Hostin D."/>
            <person name="Houston K.A."/>
            <person name="Howland T.J."/>
            <person name="Wei M.-H."/>
            <person name="Ibegwam C."/>
            <person name="Jalali M."/>
            <person name="Kalush F."/>
            <person name="Karpen G.H."/>
            <person name="Ke Z."/>
            <person name="Kennison J.A."/>
            <person name="Ketchum K.A."/>
            <person name="Kimmel B.E."/>
            <person name="Kodira C.D."/>
            <person name="Kraft C.L."/>
            <person name="Kravitz S."/>
            <person name="Kulp D."/>
            <person name="Lai Z."/>
            <person name="Lasko P."/>
            <person name="Lei Y."/>
            <person name="Levitsky A.A."/>
            <person name="Li J.H."/>
            <person name="Li Z."/>
            <person name="Liang Y."/>
            <person name="Lin X."/>
            <person name="Liu X."/>
            <person name="Mattei B."/>
            <person name="McIntosh T.C."/>
            <person name="McLeod M.P."/>
            <person name="McPherson D."/>
            <person name="Merkulov G."/>
            <person name="Milshina N.V."/>
            <person name="Mobarry C."/>
            <person name="Morris J."/>
            <person name="Moshrefi A."/>
            <person name="Mount S.M."/>
            <person name="Moy M."/>
            <person name="Murphy B."/>
            <person name="Murphy L."/>
            <person name="Muzny D.M."/>
            <person name="Nelson D.L."/>
            <person name="Nelson D.R."/>
            <person name="Nelson K.A."/>
            <person name="Nixon K."/>
            <person name="Nusskern D.R."/>
            <person name="Pacleb J.M."/>
            <person name="Palazzolo M."/>
            <person name="Pittman G.S."/>
            <person name="Pan S."/>
            <person name="Pollard J."/>
            <person name="Puri V."/>
            <person name="Reese M.G."/>
            <person name="Reinert K."/>
            <person name="Remington K."/>
            <person name="Saunders R.D.C."/>
            <person name="Scheeler F."/>
            <person name="Shen H."/>
            <person name="Shue B.C."/>
            <person name="Siden-Kiamos I."/>
            <person name="Simpson M."/>
            <person name="Skupski M.P."/>
            <person name="Smith T.J."/>
            <person name="Spier E."/>
            <person name="Spradling A.C."/>
            <person name="Stapleton M."/>
            <person name="Strong R."/>
            <person name="Sun E."/>
            <person name="Svirskas R."/>
            <person name="Tector C."/>
            <person name="Turner R."/>
            <person name="Venter E."/>
            <person name="Wang A.H."/>
            <person name="Wang X."/>
            <person name="Wang Z.-Y."/>
            <person name="Wassarman D.A."/>
            <person name="Weinstock G.M."/>
            <person name="Weissenbach J."/>
            <person name="Williams S.M."/>
            <person name="Woodage T."/>
            <person name="Worley K.C."/>
            <person name="Wu D."/>
            <person name="Yang S."/>
            <person name="Yao Q.A."/>
            <person name="Ye J."/>
            <person name="Yeh R.-F."/>
            <person name="Zaveri J.S."/>
            <person name="Zhan M."/>
            <person name="Zhang G."/>
            <person name="Zhao Q."/>
            <person name="Zheng L."/>
            <person name="Zheng X.H."/>
            <person name="Zhong F.N."/>
            <person name="Zhong W."/>
            <person name="Zhou X."/>
            <person name="Zhu S.C."/>
            <person name="Zhu X."/>
            <person name="Smith H.O."/>
            <person name="Gibbs R.A."/>
            <person name="Myers E.W."/>
            <person name="Rubin G.M."/>
            <person name="Venter J.C."/>
        </authorList>
    </citation>
    <scope>NUCLEOTIDE SEQUENCE [LARGE SCALE GENOMIC DNA]</scope>
    <source>
        <strain>Berkeley</strain>
    </source>
</reference>
<reference key="2">
    <citation type="journal article" date="2002" name="Genome Biol.">
        <title>Annotation of the Drosophila melanogaster euchromatic genome: a systematic review.</title>
        <authorList>
            <person name="Misra S."/>
            <person name="Crosby M.A."/>
            <person name="Mungall C.J."/>
            <person name="Matthews B.B."/>
            <person name="Campbell K.S."/>
            <person name="Hradecky P."/>
            <person name="Huang Y."/>
            <person name="Kaminker J.S."/>
            <person name="Millburn G.H."/>
            <person name="Prochnik S.E."/>
            <person name="Smith C.D."/>
            <person name="Tupy J.L."/>
            <person name="Whitfield E.J."/>
            <person name="Bayraktaroglu L."/>
            <person name="Berman B.P."/>
            <person name="Bettencourt B.R."/>
            <person name="Celniker S.E."/>
            <person name="de Grey A.D.N.J."/>
            <person name="Drysdale R.A."/>
            <person name="Harris N.L."/>
            <person name="Richter J."/>
            <person name="Russo S."/>
            <person name="Schroeder A.J."/>
            <person name="Shu S.Q."/>
            <person name="Stapleton M."/>
            <person name="Yamada C."/>
            <person name="Ashburner M."/>
            <person name="Gelbart W.M."/>
            <person name="Rubin G.M."/>
            <person name="Lewis S.E."/>
        </authorList>
    </citation>
    <scope>GENOME REANNOTATION</scope>
    <source>
        <strain>Berkeley</strain>
    </source>
</reference>
<reference key="3">
    <citation type="journal article" date="2002" name="Genome Biol.">
        <title>A Drosophila full-length cDNA resource.</title>
        <authorList>
            <person name="Stapleton M."/>
            <person name="Carlson J.W."/>
            <person name="Brokstein P."/>
            <person name="Yu C."/>
            <person name="Champe M."/>
            <person name="George R.A."/>
            <person name="Guarin H."/>
            <person name="Kronmiller B."/>
            <person name="Pacleb J.M."/>
            <person name="Park S."/>
            <person name="Wan K.H."/>
            <person name="Rubin G.M."/>
            <person name="Celniker S.E."/>
        </authorList>
    </citation>
    <scope>NUCLEOTIDE SEQUENCE [LARGE SCALE MRNA]</scope>
    <source>
        <strain>Berkeley</strain>
        <tissue>Embryo</tissue>
    </source>
</reference>
<comment type="function">
    <text evidence="1">Transcription repressor.</text>
</comment>
<comment type="subcellular location">
    <subcellularLocation>
        <location evidence="1">Nucleus</location>
    </subcellularLocation>
</comment>
<protein>
    <recommendedName>
        <fullName>Zinc finger CCCH-type with G patch domain-containing protein</fullName>
    </recommendedName>
</protein>
<evidence type="ECO:0000250" key="1"/>
<evidence type="ECO:0000255" key="2">
    <source>
        <dbReference type="PROSITE-ProRule" id="PRU00092"/>
    </source>
</evidence>
<evidence type="ECO:0000255" key="3">
    <source>
        <dbReference type="PROSITE-ProRule" id="PRU00723"/>
    </source>
</evidence>
<evidence type="ECO:0000256" key="4">
    <source>
        <dbReference type="SAM" id="MobiDB-lite"/>
    </source>
</evidence>
<accession>Q9VL59</accession>
<keyword id="KW-0238">DNA-binding</keyword>
<keyword id="KW-0479">Metal-binding</keyword>
<keyword id="KW-0539">Nucleus</keyword>
<keyword id="KW-1185">Reference proteome</keyword>
<keyword id="KW-0678">Repressor</keyword>
<keyword id="KW-0804">Transcription</keyword>
<keyword id="KW-0805">Transcription regulation</keyword>
<keyword id="KW-0862">Zinc</keyword>
<keyword id="KW-0863">Zinc-finger</keyword>
<name>ZGPAT_DROME</name>
<organism>
    <name type="scientific">Drosophila melanogaster</name>
    <name type="common">Fruit fly</name>
    <dbReference type="NCBI Taxonomy" id="7227"/>
    <lineage>
        <taxon>Eukaryota</taxon>
        <taxon>Metazoa</taxon>
        <taxon>Ecdysozoa</taxon>
        <taxon>Arthropoda</taxon>
        <taxon>Hexapoda</taxon>
        <taxon>Insecta</taxon>
        <taxon>Pterygota</taxon>
        <taxon>Neoptera</taxon>
        <taxon>Endopterygota</taxon>
        <taxon>Diptera</taxon>
        <taxon>Brachycera</taxon>
        <taxon>Muscomorpha</taxon>
        <taxon>Ephydroidea</taxon>
        <taxon>Drosophilidae</taxon>
        <taxon>Drosophila</taxon>
        <taxon>Sophophora</taxon>
    </lineage>
</organism>
<dbReference type="EMBL" id="AE014134">
    <property type="protein sequence ID" value="AAF52837.1"/>
    <property type="molecule type" value="Genomic_DNA"/>
</dbReference>
<dbReference type="EMBL" id="AY058650">
    <property type="protein sequence ID" value="AAL13879.1"/>
    <property type="molecule type" value="mRNA"/>
</dbReference>
<dbReference type="RefSeq" id="NP_001285788.1">
    <property type="nucleotide sequence ID" value="NM_001298859.1"/>
</dbReference>
<dbReference type="RefSeq" id="NP_609331.1">
    <property type="nucleotide sequence ID" value="NM_135487.4"/>
</dbReference>
<dbReference type="SMR" id="Q9VL59"/>
<dbReference type="BioGRID" id="60418">
    <property type="interactions" value="2"/>
</dbReference>
<dbReference type="FunCoup" id="Q9VL59">
    <property type="interactions" value="1290"/>
</dbReference>
<dbReference type="IntAct" id="Q9VL59">
    <property type="interactions" value="15"/>
</dbReference>
<dbReference type="STRING" id="7227.FBpp0310303"/>
<dbReference type="PaxDb" id="7227-FBpp0079480"/>
<dbReference type="DNASU" id="34324"/>
<dbReference type="EnsemblMetazoa" id="FBtr0079884">
    <property type="protein sequence ID" value="FBpp0079480"/>
    <property type="gene ID" value="FBgn0032169"/>
</dbReference>
<dbReference type="EnsemblMetazoa" id="FBtr0343737">
    <property type="protein sequence ID" value="FBpp0310303"/>
    <property type="gene ID" value="FBgn0032169"/>
</dbReference>
<dbReference type="GeneID" id="34324"/>
<dbReference type="KEGG" id="dme:Dmel_CG4709"/>
<dbReference type="UCSC" id="CG4709-RA">
    <property type="organism name" value="d. melanogaster"/>
</dbReference>
<dbReference type="AGR" id="FB:FBgn0032169"/>
<dbReference type="FlyBase" id="FBgn0032169">
    <property type="gene designation" value="CG4709"/>
</dbReference>
<dbReference type="VEuPathDB" id="VectorBase:FBgn0032169"/>
<dbReference type="eggNOG" id="KOG2185">
    <property type="taxonomic scope" value="Eukaryota"/>
</dbReference>
<dbReference type="HOGENOM" id="CLU_040504_1_0_1"/>
<dbReference type="InParanoid" id="Q9VL59"/>
<dbReference type="OMA" id="QYTRGIG"/>
<dbReference type="OrthoDB" id="5842926at2759"/>
<dbReference type="PhylomeDB" id="Q9VL59"/>
<dbReference type="BioGRID-ORCS" id="34324">
    <property type="hits" value="0 hits in 1 CRISPR screen"/>
</dbReference>
<dbReference type="ChiTaRS" id="CG4709">
    <property type="organism name" value="fly"/>
</dbReference>
<dbReference type="GenomeRNAi" id="34324"/>
<dbReference type="PRO" id="PR:Q9VL59"/>
<dbReference type="Proteomes" id="UP000000803">
    <property type="component" value="Chromosome 2L"/>
</dbReference>
<dbReference type="Bgee" id="FBgn0032169">
    <property type="expression patterns" value="Expressed in eye disc (Drosophila) and 47 other cell types or tissues"/>
</dbReference>
<dbReference type="ExpressionAtlas" id="Q9VL59">
    <property type="expression patterns" value="baseline and differential"/>
</dbReference>
<dbReference type="GO" id="GO:0005634">
    <property type="term" value="C:nucleus"/>
    <property type="evidence" value="ECO:0000318"/>
    <property type="project" value="GO_Central"/>
</dbReference>
<dbReference type="GO" id="GO:0001227">
    <property type="term" value="F:DNA-binding transcription repressor activity, RNA polymerase II-specific"/>
    <property type="evidence" value="ECO:0000318"/>
    <property type="project" value="GO_Central"/>
</dbReference>
<dbReference type="GO" id="GO:0000978">
    <property type="term" value="F:RNA polymerase II cis-regulatory region sequence-specific DNA binding"/>
    <property type="evidence" value="ECO:0000318"/>
    <property type="project" value="GO_Central"/>
</dbReference>
<dbReference type="GO" id="GO:0008270">
    <property type="term" value="F:zinc ion binding"/>
    <property type="evidence" value="ECO:0007669"/>
    <property type="project" value="UniProtKB-KW"/>
</dbReference>
<dbReference type="GO" id="GO:0000122">
    <property type="term" value="P:negative regulation of transcription by RNA polymerase II"/>
    <property type="evidence" value="ECO:0000318"/>
    <property type="project" value="GO_Central"/>
</dbReference>
<dbReference type="Gene3D" id="2.30.30.1190">
    <property type="match status" value="1"/>
</dbReference>
<dbReference type="InterPro" id="IPR000467">
    <property type="entry name" value="G_patch_dom"/>
</dbReference>
<dbReference type="InterPro" id="IPR000571">
    <property type="entry name" value="Znf_CCCH"/>
</dbReference>
<dbReference type="PANTHER" id="PTHR46297">
    <property type="entry name" value="ZINC FINGER CCCH-TYPE WITH G PATCH DOMAIN-CONTAINING PROTEIN"/>
    <property type="match status" value="1"/>
</dbReference>
<dbReference type="PANTHER" id="PTHR46297:SF1">
    <property type="entry name" value="ZINC FINGER CCCH-TYPE WITH G PATCH DOMAIN-CONTAINING PROTEIN"/>
    <property type="match status" value="1"/>
</dbReference>
<dbReference type="Pfam" id="PF01585">
    <property type="entry name" value="G-patch"/>
    <property type="match status" value="1"/>
</dbReference>
<dbReference type="SMART" id="SM00443">
    <property type="entry name" value="G_patch"/>
    <property type="match status" value="1"/>
</dbReference>
<dbReference type="PROSITE" id="PS50174">
    <property type="entry name" value="G_PATCH"/>
    <property type="match status" value="1"/>
</dbReference>
<dbReference type="PROSITE" id="PS50103">
    <property type="entry name" value="ZF_C3H1"/>
    <property type="match status" value="1"/>
</dbReference>